<keyword id="KW-0963">Cytoplasm</keyword>
<keyword id="KW-0227">DNA damage</keyword>
<keyword id="KW-0234">DNA repair</keyword>
<keyword id="KW-0378">Hydrolase</keyword>
<keyword id="KW-1185">Reference proteome</keyword>
<proteinExistence type="inferred from homology"/>
<feature type="chain" id="PRO_1000096562" description="Uracil-DNA glycosylase">
    <location>
        <begin position="1"/>
        <end position="220"/>
    </location>
</feature>
<feature type="active site" description="Proton acceptor" evidence="1">
    <location>
        <position position="65"/>
    </location>
</feature>
<comment type="function">
    <text evidence="1">Excises uracil residues from the DNA which can arise as a result of misincorporation of dUMP residues by DNA polymerase or due to deamination of cytosine.</text>
</comment>
<comment type="catalytic activity">
    <reaction evidence="1">
        <text>Hydrolyzes single-stranded DNA or mismatched double-stranded DNA and polynucleotides, releasing free uracil.</text>
        <dbReference type="EC" id="3.2.2.27"/>
    </reaction>
</comment>
<comment type="subcellular location">
    <subcellularLocation>
        <location evidence="1">Cytoplasm</location>
    </subcellularLocation>
</comment>
<comment type="similarity">
    <text evidence="1">Belongs to the uracil-DNA glycosylase (UDG) superfamily. UNG family.</text>
</comment>
<gene>
    <name evidence="1" type="primary">ung</name>
    <name type="ordered locus">Aasi_0400</name>
</gene>
<dbReference type="EC" id="3.2.2.27" evidence="1"/>
<dbReference type="EMBL" id="CP001102">
    <property type="protein sequence ID" value="ACE05818.1"/>
    <property type="molecule type" value="Genomic_DNA"/>
</dbReference>
<dbReference type="RefSeq" id="WP_012472579.1">
    <property type="nucleotide sequence ID" value="NC_010830.1"/>
</dbReference>
<dbReference type="SMR" id="B3ERG6"/>
<dbReference type="STRING" id="452471.Aasi_0400"/>
<dbReference type="KEGG" id="aas:Aasi_0400"/>
<dbReference type="eggNOG" id="COG0692">
    <property type="taxonomic scope" value="Bacteria"/>
</dbReference>
<dbReference type="HOGENOM" id="CLU_032162_3_0_10"/>
<dbReference type="OrthoDB" id="9804372at2"/>
<dbReference type="Proteomes" id="UP000001227">
    <property type="component" value="Chromosome"/>
</dbReference>
<dbReference type="GO" id="GO:0005737">
    <property type="term" value="C:cytoplasm"/>
    <property type="evidence" value="ECO:0007669"/>
    <property type="project" value="UniProtKB-SubCell"/>
</dbReference>
<dbReference type="GO" id="GO:0004844">
    <property type="term" value="F:uracil DNA N-glycosylase activity"/>
    <property type="evidence" value="ECO:0007669"/>
    <property type="project" value="UniProtKB-UniRule"/>
</dbReference>
<dbReference type="GO" id="GO:0097510">
    <property type="term" value="P:base-excision repair, AP site formation via deaminated base removal"/>
    <property type="evidence" value="ECO:0007669"/>
    <property type="project" value="TreeGrafter"/>
</dbReference>
<dbReference type="CDD" id="cd10027">
    <property type="entry name" value="UDG-F1-like"/>
    <property type="match status" value="1"/>
</dbReference>
<dbReference type="FunFam" id="3.40.470.10:FF:000001">
    <property type="entry name" value="Uracil-DNA glycosylase"/>
    <property type="match status" value="1"/>
</dbReference>
<dbReference type="Gene3D" id="3.40.470.10">
    <property type="entry name" value="Uracil-DNA glycosylase-like domain"/>
    <property type="match status" value="1"/>
</dbReference>
<dbReference type="HAMAP" id="MF_00148">
    <property type="entry name" value="UDG"/>
    <property type="match status" value="1"/>
</dbReference>
<dbReference type="InterPro" id="IPR002043">
    <property type="entry name" value="UDG_fam1"/>
</dbReference>
<dbReference type="InterPro" id="IPR018085">
    <property type="entry name" value="Ura-DNA_Glyclase_AS"/>
</dbReference>
<dbReference type="InterPro" id="IPR005122">
    <property type="entry name" value="Uracil-DNA_glycosylase-like"/>
</dbReference>
<dbReference type="InterPro" id="IPR036895">
    <property type="entry name" value="Uracil-DNA_glycosylase-like_sf"/>
</dbReference>
<dbReference type="NCBIfam" id="NF003588">
    <property type="entry name" value="PRK05254.1-1"/>
    <property type="match status" value="1"/>
</dbReference>
<dbReference type="NCBIfam" id="NF003589">
    <property type="entry name" value="PRK05254.1-2"/>
    <property type="match status" value="1"/>
</dbReference>
<dbReference type="NCBIfam" id="NF003591">
    <property type="entry name" value="PRK05254.1-4"/>
    <property type="match status" value="1"/>
</dbReference>
<dbReference type="NCBIfam" id="NF003592">
    <property type="entry name" value="PRK05254.1-5"/>
    <property type="match status" value="1"/>
</dbReference>
<dbReference type="NCBIfam" id="TIGR00628">
    <property type="entry name" value="ung"/>
    <property type="match status" value="1"/>
</dbReference>
<dbReference type="PANTHER" id="PTHR11264">
    <property type="entry name" value="URACIL-DNA GLYCOSYLASE"/>
    <property type="match status" value="1"/>
</dbReference>
<dbReference type="PANTHER" id="PTHR11264:SF0">
    <property type="entry name" value="URACIL-DNA GLYCOSYLASE"/>
    <property type="match status" value="1"/>
</dbReference>
<dbReference type="Pfam" id="PF03167">
    <property type="entry name" value="UDG"/>
    <property type="match status" value="1"/>
</dbReference>
<dbReference type="SMART" id="SM00986">
    <property type="entry name" value="UDG"/>
    <property type="match status" value="1"/>
</dbReference>
<dbReference type="SMART" id="SM00987">
    <property type="entry name" value="UreE_C"/>
    <property type="match status" value="1"/>
</dbReference>
<dbReference type="SUPFAM" id="SSF52141">
    <property type="entry name" value="Uracil-DNA glycosylase-like"/>
    <property type="match status" value="1"/>
</dbReference>
<dbReference type="PROSITE" id="PS00130">
    <property type="entry name" value="U_DNA_GLYCOSYLASE"/>
    <property type="match status" value="1"/>
</dbReference>
<accession>B3ERG6</accession>
<organism>
    <name type="scientific">Amoebophilus asiaticus (strain 5a2)</name>
    <dbReference type="NCBI Taxonomy" id="452471"/>
    <lineage>
        <taxon>Bacteria</taxon>
        <taxon>Pseudomonadati</taxon>
        <taxon>Bacteroidota</taxon>
        <taxon>Cytophagia</taxon>
        <taxon>Cytophagales</taxon>
        <taxon>Amoebophilaceae</taxon>
        <taxon>Candidatus Amoebophilus</taxon>
    </lineage>
</organism>
<sequence>MQVNIAPSWKPYLEEEFNKPYFEQLAAFVKAEYKSNTIYPPAKQIFNAFELCSFDNTKVVILGQDPYHGFKQANGLSFSVGKEVRMPPSLVNIFKEIESDLGHPVPTNGDLTRWAQQGVLLLNATLTVREKQPGSHQNKGWETFTDTIISILSQHKQHLVFMLWGNYAQKKEVLIDTSKHLVLKSAHPSPYAADRGFFGNKHFSKANAYLVEHGLTPINW</sequence>
<evidence type="ECO:0000255" key="1">
    <source>
        <dbReference type="HAMAP-Rule" id="MF_00148"/>
    </source>
</evidence>
<protein>
    <recommendedName>
        <fullName evidence="1">Uracil-DNA glycosylase</fullName>
        <shortName evidence="1">UDG</shortName>
        <ecNumber evidence="1">3.2.2.27</ecNumber>
    </recommendedName>
</protein>
<reference key="1">
    <citation type="journal article" date="2010" name="J. Bacteriol.">
        <title>The genome of the amoeba symbiont 'Candidatus Amoebophilus asiaticus' reveals common mechanisms for host cell interaction among amoeba-associated bacteria.</title>
        <authorList>
            <person name="Schmitz-Esser S."/>
            <person name="Tischler P."/>
            <person name="Arnold R."/>
            <person name="Montanaro J."/>
            <person name="Wagner M."/>
            <person name="Rattei T."/>
            <person name="Horn M."/>
        </authorList>
    </citation>
    <scope>NUCLEOTIDE SEQUENCE [LARGE SCALE GENOMIC DNA]</scope>
    <source>
        <strain>5a2</strain>
    </source>
</reference>
<name>UNG_AMOA5</name>